<accession>B7KW92</accession>
<comment type="function">
    <text evidence="1">Catalyzes the formation of S-adenosylmethionine (AdoMet) from methionine and ATP. The overall synthetic reaction is composed of two sequential steps, AdoMet formation and the subsequent tripolyphosphate hydrolysis which occurs prior to release of AdoMet from the enzyme.</text>
</comment>
<comment type="catalytic activity">
    <reaction evidence="1">
        <text>L-methionine + ATP + H2O = S-adenosyl-L-methionine + phosphate + diphosphate</text>
        <dbReference type="Rhea" id="RHEA:21080"/>
        <dbReference type="ChEBI" id="CHEBI:15377"/>
        <dbReference type="ChEBI" id="CHEBI:30616"/>
        <dbReference type="ChEBI" id="CHEBI:33019"/>
        <dbReference type="ChEBI" id="CHEBI:43474"/>
        <dbReference type="ChEBI" id="CHEBI:57844"/>
        <dbReference type="ChEBI" id="CHEBI:59789"/>
        <dbReference type="EC" id="2.5.1.6"/>
    </reaction>
</comment>
<comment type="cofactor">
    <cofactor evidence="1">
        <name>Mg(2+)</name>
        <dbReference type="ChEBI" id="CHEBI:18420"/>
    </cofactor>
    <text evidence="1">Binds 2 divalent ions per subunit.</text>
</comment>
<comment type="cofactor">
    <cofactor evidence="1">
        <name>K(+)</name>
        <dbReference type="ChEBI" id="CHEBI:29103"/>
    </cofactor>
    <text evidence="1">Binds 1 potassium ion per subunit.</text>
</comment>
<comment type="pathway">
    <text evidence="1">Amino-acid biosynthesis; S-adenosyl-L-methionine biosynthesis; S-adenosyl-L-methionine from L-methionine: step 1/1.</text>
</comment>
<comment type="subunit">
    <text evidence="1">Homotetramer; dimer of dimers.</text>
</comment>
<comment type="subcellular location">
    <subcellularLocation>
        <location evidence="1">Cytoplasm</location>
    </subcellularLocation>
</comment>
<comment type="similarity">
    <text evidence="1">Belongs to the AdoMet synthase family.</text>
</comment>
<evidence type="ECO:0000255" key="1">
    <source>
        <dbReference type="HAMAP-Rule" id="MF_00086"/>
    </source>
</evidence>
<evidence type="ECO:0000256" key="2">
    <source>
        <dbReference type="SAM" id="MobiDB-lite"/>
    </source>
</evidence>
<protein>
    <recommendedName>
        <fullName evidence="1">S-adenosylmethionine synthase</fullName>
        <shortName evidence="1">AdoMet synthase</shortName>
        <ecNumber evidence="1">2.5.1.6</ecNumber>
    </recommendedName>
    <alternativeName>
        <fullName evidence="1">MAT</fullName>
    </alternativeName>
    <alternativeName>
        <fullName evidence="1">Methionine adenosyltransferase</fullName>
    </alternativeName>
</protein>
<gene>
    <name evidence="1" type="primary">metK</name>
    <name type="ordered locus">Mchl_3629</name>
</gene>
<organism>
    <name type="scientific">Methylorubrum extorquens (strain CM4 / NCIMB 13688)</name>
    <name type="common">Methylobacterium extorquens</name>
    <dbReference type="NCBI Taxonomy" id="440085"/>
    <lineage>
        <taxon>Bacteria</taxon>
        <taxon>Pseudomonadati</taxon>
        <taxon>Pseudomonadota</taxon>
        <taxon>Alphaproteobacteria</taxon>
        <taxon>Hyphomicrobiales</taxon>
        <taxon>Methylobacteriaceae</taxon>
        <taxon>Methylorubrum</taxon>
    </lineage>
</organism>
<name>METK_METC4</name>
<proteinExistence type="inferred from homology"/>
<reference key="1">
    <citation type="submission" date="2008-12" db="EMBL/GenBank/DDBJ databases">
        <title>Complete sequence of chromosome of Methylobacterium chloromethanicum CM4.</title>
        <authorList>
            <consortium name="US DOE Joint Genome Institute"/>
            <person name="Lucas S."/>
            <person name="Copeland A."/>
            <person name="Lapidus A."/>
            <person name="Glavina del Rio T."/>
            <person name="Dalin E."/>
            <person name="Tice H."/>
            <person name="Bruce D."/>
            <person name="Goodwin L."/>
            <person name="Pitluck S."/>
            <person name="Chertkov O."/>
            <person name="Brettin T."/>
            <person name="Detter J.C."/>
            <person name="Han C."/>
            <person name="Larimer F."/>
            <person name="Land M."/>
            <person name="Hauser L."/>
            <person name="Kyrpides N."/>
            <person name="Mikhailova N."/>
            <person name="Marx C."/>
            <person name="Richardson P."/>
        </authorList>
    </citation>
    <scope>NUCLEOTIDE SEQUENCE [LARGE SCALE GENOMIC DNA]</scope>
    <source>
        <strain>CM4 / NCIMB 13688</strain>
    </source>
</reference>
<feature type="chain" id="PRO_1000196718" description="S-adenosylmethionine synthase">
    <location>
        <begin position="1"/>
        <end position="391"/>
    </location>
</feature>
<feature type="region of interest" description="Disordered" evidence="2">
    <location>
        <begin position="1"/>
        <end position="20"/>
    </location>
</feature>
<feature type="region of interest" description="Flexible loop" evidence="1">
    <location>
        <begin position="102"/>
        <end position="112"/>
    </location>
</feature>
<feature type="binding site" description="in other chain" evidence="1">
    <location>
        <position position="17"/>
    </location>
    <ligand>
        <name>ATP</name>
        <dbReference type="ChEBI" id="CHEBI:30616"/>
        <note>ligand shared between two neighboring subunits</note>
    </ligand>
</feature>
<feature type="binding site" evidence="1">
    <location>
        <position position="19"/>
    </location>
    <ligand>
        <name>Mg(2+)</name>
        <dbReference type="ChEBI" id="CHEBI:18420"/>
    </ligand>
</feature>
<feature type="binding site" evidence="1">
    <location>
        <position position="45"/>
    </location>
    <ligand>
        <name>K(+)</name>
        <dbReference type="ChEBI" id="CHEBI:29103"/>
    </ligand>
</feature>
<feature type="binding site" description="in other chain" evidence="1">
    <location>
        <position position="58"/>
    </location>
    <ligand>
        <name>L-methionine</name>
        <dbReference type="ChEBI" id="CHEBI:57844"/>
        <note>ligand shared between two neighboring subunits</note>
    </ligand>
</feature>
<feature type="binding site" description="in other chain" evidence="1">
    <location>
        <position position="102"/>
    </location>
    <ligand>
        <name>L-methionine</name>
        <dbReference type="ChEBI" id="CHEBI:57844"/>
        <note>ligand shared between two neighboring subunits</note>
    </ligand>
</feature>
<feature type="binding site" description="in other chain" evidence="1">
    <location>
        <begin position="169"/>
        <end position="171"/>
    </location>
    <ligand>
        <name>ATP</name>
        <dbReference type="ChEBI" id="CHEBI:30616"/>
        <note>ligand shared between two neighboring subunits</note>
    </ligand>
</feature>
<feature type="binding site" description="in other chain" evidence="1">
    <location>
        <begin position="235"/>
        <end position="236"/>
    </location>
    <ligand>
        <name>ATP</name>
        <dbReference type="ChEBI" id="CHEBI:30616"/>
        <note>ligand shared between two neighboring subunits</note>
    </ligand>
</feature>
<feature type="binding site" evidence="1">
    <location>
        <position position="244"/>
    </location>
    <ligand>
        <name>ATP</name>
        <dbReference type="ChEBI" id="CHEBI:30616"/>
        <note>ligand shared between two neighboring subunits</note>
    </ligand>
</feature>
<feature type="binding site" evidence="1">
    <location>
        <position position="244"/>
    </location>
    <ligand>
        <name>L-methionine</name>
        <dbReference type="ChEBI" id="CHEBI:57844"/>
        <note>ligand shared between two neighboring subunits</note>
    </ligand>
</feature>
<feature type="binding site" description="in other chain" evidence="1">
    <location>
        <begin position="250"/>
        <end position="251"/>
    </location>
    <ligand>
        <name>ATP</name>
        <dbReference type="ChEBI" id="CHEBI:30616"/>
        <note>ligand shared between two neighboring subunits</note>
    </ligand>
</feature>
<feature type="binding site" evidence="1">
    <location>
        <position position="267"/>
    </location>
    <ligand>
        <name>ATP</name>
        <dbReference type="ChEBI" id="CHEBI:30616"/>
        <note>ligand shared between two neighboring subunits</note>
    </ligand>
</feature>
<feature type="binding site" evidence="1">
    <location>
        <position position="271"/>
    </location>
    <ligand>
        <name>ATP</name>
        <dbReference type="ChEBI" id="CHEBI:30616"/>
        <note>ligand shared between two neighboring subunits</note>
    </ligand>
</feature>
<feature type="binding site" description="in other chain" evidence="1">
    <location>
        <position position="275"/>
    </location>
    <ligand>
        <name>L-methionine</name>
        <dbReference type="ChEBI" id="CHEBI:57844"/>
        <note>ligand shared between two neighboring subunits</note>
    </ligand>
</feature>
<sequence>MPRSDYLFTSESVSEGHPDKVSDRISDTVVDAYLSAMPEARLGVETLTTTNRVVIAGEVRGPDSVTFKDLEELTREAVRDIGYEQSGFHWKNNDVAIHLHAQSADIAQGVDAAGNKDEGAGDQGIMFGYAADETPALMPAPIFYAHKILKDLADARKAKQGDAAKLGPDAKSQVTVRYANGRPVEVTQIVLSTQHLDESLDSADVRAIVEPYILKALPQGWVNEGTVWHVNPTGKFVIGGPDGDAGLTGRKIIVDTYGGAAPHGGGAFSGKDPTKVDRSAAYAARYLAKNVVAAGLARRATIQLSYAIGVAKPLSIYVDLHGTGTVDEAKLETVLMDALDLSPRGIRTALQLNKPIYARTSAYGHFGREPDADGGFSWEKTDLADKLKSAF</sequence>
<dbReference type="EC" id="2.5.1.6" evidence="1"/>
<dbReference type="EMBL" id="CP001298">
    <property type="protein sequence ID" value="ACK84449.1"/>
    <property type="molecule type" value="Genomic_DNA"/>
</dbReference>
<dbReference type="RefSeq" id="WP_003599336.1">
    <property type="nucleotide sequence ID" value="NC_011757.1"/>
</dbReference>
<dbReference type="SMR" id="B7KW92"/>
<dbReference type="KEGG" id="mch:Mchl_3629"/>
<dbReference type="HOGENOM" id="CLU_041802_1_1_5"/>
<dbReference type="UniPathway" id="UPA00315">
    <property type="reaction ID" value="UER00080"/>
</dbReference>
<dbReference type="Proteomes" id="UP000002385">
    <property type="component" value="Chromosome"/>
</dbReference>
<dbReference type="GO" id="GO:0005737">
    <property type="term" value="C:cytoplasm"/>
    <property type="evidence" value="ECO:0007669"/>
    <property type="project" value="UniProtKB-SubCell"/>
</dbReference>
<dbReference type="GO" id="GO:0005524">
    <property type="term" value="F:ATP binding"/>
    <property type="evidence" value="ECO:0007669"/>
    <property type="project" value="UniProtKB-UniRule"/>
</dbReference>
<dbReference type="GO" id="GO:0000287">
    <property type="term" value="F:magnesium ion binding"/>
    <property type="evidence" value="ECO:0007669"/>
    <property type="project" value="UniProtKB-UniRule"/>
</dbReference>
<dbReference type="GO" id="GO:0004478">
    <property type="term" value="F:methionine adenosyltransferase activity"/>
    <property type="evidence" value="ECO:0007669"/>
    <property type="project" value="UniProtKB-UniRule"/>
</dbReference>
<dbReference type="GO" id="GO:0006730">
    <property type="term" value="P:one-carbon metabolic process"/>
    <property type="evidence" value="ECO:0007669"/>
    <property type="project" value="UniProtKB-KW"/>
</dbReference>
<dbReference type="GO" id="GO:0006556">
    <property type="term" value="P:S-adenosylmethionine biosynthetic process"/>
    <property type="evidence" value="ECO:0007669"/>
    <property type="project" value="UniProtKB-UniRule"/>
</dbReference>
<dbReference type="CDD" id="cd18079">
    <property type="entry name" value="S-AdoMet_synt"/>
    <property type="match status" value="1"/>
</dbReference>
<dbReference type="Gene3D" id="3.30.300.10">
    <property type="match status" value="3"/>
</dbReference>
<dbReference type="HAMAP" id="MF_00086">
    <property type="entry name" value="S_AdoMet_synth1"/>
    <property type="match status" value="1"/>
</dbReference>
<dbReference type="InterPro" id="IPR022631">
    <property type="entry name" value="ADOMET_SYNTHASE_CS"/>
</dbReference>
<dbReference type="InterPro" id="IPR022630">
    <property type="entry name" value="S-AdoMet_synt_C"/>
</dbReference>
<dbReference type="InterPro" id="IPR022629">
    <property type="entry name" value="S-AdoMet_synt_central"/>
</dbReference>
<dbReference type="InterPro" id="IPR022628">
    <property type="entry name" value="S-AdoMet_synt_N"/>
</dbReference>
<dbReference type="InterPro" id="IPR002133">
    <property type="entry name" value="S-AdoMet_synthetase"/>
</dbReference>
<dbReference type="InterPro" id="IPR022636">
    <property type="entry name" value="S-AdoMet_synthetase_sfam"/>
</dbReference>
<dbReference type="NCBIfam" id="TIGR01034">
    <property type="entry name" value="metK"/>
    <property type="match status" value="1"/>
</dbReference>
<dbReference type="PANTHER" id="PTHR11964">
    <property type="entry name" value="S-ADENOSYLMETHIONINE SYNTHETASE"/>
    <property type="match status" value="1"/>
</dbReference>
<dbReference type="Pfam" id="PF02773">
    <property type="entry name" value="S-AdoMet_synt_C"/>
    <property type="match status" value="1"/>
</dbReference>
<dbReference type="Pfam" id="PF02772">
    <property type="entry name" value="S-AdoMet_synt_M"/>
    <property type="match status" value="1"/>
</dbReference>
<dbReference type="Pfam" id="PF00438">
    <property type="entry name" value="S-AdoMet_synt_N"/>
    <property type="match status" value="1"/>
</dbReference>
<dbReference type="PIRSF" id="PIRSF000497">
    <property type="entry name" value="MAT"/>
    <property type="match status" value="1"/>
</dbReference>
<dbReference type="SUPFAM" id="SSF55973">
    <property type="entry name" value="S-adenosylmethionine synthetase"/>
    <property type="match status" value="3"/>
</dbReference>
<dbReference type="PROSITE" id="PS00376">
    <property type="entry name" value="ADOMET_SYNTHASE_1"/>
    <property type="match status" value="1"/>
</dbReference>
<dbReference type="PROSITE" id="PS00377">
    <property type="entry name" value="ADOMET_SYNTHASE_2"/>
    <property type="match status" value="1"/>
</dbReference>
<keyword id="KW-0067">ATP-binding</keyword>
<keyword id="KW-0963">Cytoplasm</keyword>
<keyword id="KW-0460">Magnesium</keyword>
<keyword id="KW-0479">Metal-binding</keyword>
<keyword id="KW-0547">Nucleotide-binding</keyword>
<keyword id="KW-0554">One-carbon metabolism</keyword>
<keyword id="KW-0630">Potassium</keyword>
<keyword id="KW-0808">Transferase</keyword>